<sequence length="126" mass="14543">MHHRKSGRHLNRTSAHRKAMLRNMAVSLFQHELIKTTLPKAKELRRVVEPLITLAKEDTVANRRLAFNRLRDDAIVAKLFKEIAPRHKERPGGYCRVLKYGFRNGDSAPMAIVELVDREESESSED</sequence>
<organism>
    <name type="scientific">Coxiella burnetii (strain RSA 493 / Nine Mile phase I)</name>
    <dbReference type="NCBI Taxonomy" id="227377"/>
    <lineage>
        <taxon>Bacteria</taxon>
        <taxon>Pseudomonadati</taxon>
        <taxon>Pseudomonadota</taxon>
        <taxon>Gammaproteobacteria</taxon>
        <taxon>Legionellales</taxon>
        <taxon>Coxiellaceae</taxon>
        <taxon>Coxiella</taxon>
    </lineage>
</organism>
<accession>Q83EQ1</accession>
<reference key="1">
    <citation type="journal article" date="2003" name="Proc. Natl. Acad. Sci. U.S.A.">
        <title>Complete genome sequence of the Q-fever pathogen, Coxiella burnetii.</title>
        <authorList>
            <person name="Seshadri R."/>
            <person name="Paulsen I.T."/>
            <person name="Eisen J.A."/>
            <person name="Read T.D."/>
            <person name="Nelson K.E."/>
            <person name="Nelson W.C."/>
            <person name="Ward N.L."/>
            <person name="Tettelin H."/>
            <person name="Davidsen T.M."/>
            <person name="Beanan M.J."/>
            <person name="DeBoy R.T."/>
            <person name="Daugherty S.C."/>
            <person name="Brinkac L.M."/>
            <person name="Madupu R."/>
            <person name="Dodson R.J."/>
            <person name="Khouri H.M."/>
            <person name="Lee K.H."/>
            <person name="Carty H.A."/>
            <person name="Scanlan D."/>
            <person name="Heinzen R.A."/>
            <person name="Thompson H.A."/>
            <person name="Samuel J.E."/>
            <person name="Fraser C.M."/>
            <person name="Heidelberg J.F."/>
        </authorList>
    </citation>
    <scope>NUCLEOTIDE SEQUENCE [LARGE SCALE GENOMIC DNA]</scope>
    <source>
        <strain>RSA 493 / Nine Mile phase I</strain>
    </source>
</reference>
<proteinExistence type="inferred from homology"/>
<keyword id="KW-1185">Reference proteome</keyword>
<keyword id="KW-0687">Ribonucleoprotein</keyword>
<keyword id="KW-0689">Ribosomal protein</keyword>
<evidence type="ECO:0000255" key="1">
    <source>
        <dbReference type="HAMAP-Rule" id="MF_01368"/>
    </source>
</evidence>
<evidence type="ECO:0000305" key="2"/>
<comment type="subunit">
    <text evidence="1">Part of the 50S ribosomal subunit. Contacts protein L32.</text>
</comment>
<comment type="similarity">
    <text evidence="1">Belongs to the bacterial ribosomal protein bL17 family.</text>
</comment>
<protein>
    <recommendedName>
        <fullName evidence="1">Large ribosomal subunit protein bL17</fullName>
    </recommendedName>
    <alternativeName>
        <fullName evidence="2">50S ribosomal protein L17</fullName>
    </alternativeName>
</protein>
<name>RL17_COXBU</name>
<dbReference type="EMBL" id="AE016828">
    <property type="protein sequence ID" value="AAO89822.1"/>
    <property type="molecule type" value="Genomic_DNA"/>
</dbReference>
<dbReference type="RefSeq" id="NP_819308.1">
    <property type="nucleotide sequence ID" value="NC_002971.4"/>
</dbReference>
<dbReference type="RefSeq" id="WP_010957469.1">
    <property type="nucleotide sequence ID" value="NZ_CDBG01000001.1"/>
</dbReference>
<dbReference type="SMR" id="Q83EQ1"/>
<dbReference type="STRING" id="227377.CBU_0264"/>
<dbReference type="DNASU" id="1208145"/>
<dbReference type="EnsemblBacteria" id="AAO89822">
    <property type="protein sequence ID" value="AAO89822"/>
    <property type="gene ID" value="CBU_0264"/>
</dbReference>
<dbReference type="GeneID" id="1208145"/>
<dbReference type="KEGG" id="cbu:CBU_0264"/>
<dbReference type="PATRIC" id="fig|227377.7.peg.259"/>
<dbReference type="eggNOG" id="COG0203">
    <property type="taxonomic scope" value="Bacteria"/>
</dbReference>
<dbReference type="HOGENOM" id="CLU_074407_2_0_6"/>
<dbReference type="OrthoDB" id="9809073at2"/>
<dbReference type="Proteomes" id="UP000002671">
    <property type="component" value="Chromosome"/>
</dbReference>
<dbReference type="GO" id="GO:0022625">
    <property type="term" value="C:cytosolic large ribosomal subunit"/>
    <property type="evidence" value="ECO:0000318"/>
    <property type="project" value="GO_Central"/>
</dbReference>
<dbReference type="GO" id="GO:0003735">
    <property type="term" value="F:structural constituent of ribosome"/>
    <property type="evidence" value="ECO:0000318"/>
    <property type="project" value="GO_Central"/>
</dbReference>
<dbReference type="GO" id="GO:0006412">
    <property type="term" value="P:translation"/>
    <property type="evidence" value="ECO:0007669"/>
    <property type="project" value="UniProtKB-UniRule"/>
</dbReference>
<dbReference type="FunFam" id="3.90.1030.10:FF:000001">
    <property type="entry name" value="50S ribosomal protein L17"/>
    <property type="match status" value="1"/>
</dbReference>
<dbReference type="Gene3D" id="3.90.1030.10">
    <property type="entry name" value="Ribosomal protein L17"/>
    <property type="match status" value="1"/>
</dbReference>
<dbReference type="HAMAP" id="MF_01368">
    <property type="entry name" value="Ribosomal_bL17"/>
    <property type="match status" value="1"/>
</dbReference>
<dbReference type="InterPro" id="IPR000456">
    <property type="entry name" value="Ribosomal_bL17"/>
</dbReference>
<dbReference type="InterPro" id="IPR047859">
    <property type="entry name" value="Ribosomal_bL17_CS"/>
</dbReference>
<dbReference type="InterPro" id="IPR036373">
    <property type="entry name" value="Ribosomal_bL17_sf"/>
</dbReference>
<dbReference type="NCBIfam" id="TIGR00059">
    <property type="entry name" value="L17"/>
    <property type="match status" value="1"/>
</dbReference>
<dbReference type="PANTHER" id="PTHR14413:SF16">
    <property type="entry name" value="LARGE RIBOSOMAL SUBUNIT PROTEIN BL17M"/>
    <property type="match status" value="1"/>
</dbReference>
<dbReference type="PANTHER" id="PTHR14413">
    <property type="entry name" value="RIBOSOMAL PROTEIN L17"/>
    <property type="match status" value="1"/>
</dbReference>
<dbReference type="Pfam" id="PF01196">
    <property type="entry name" value="Ribosomal_L17"/>
    <property type="match status" value="1"/>
</dbReference>
<dbReference type="SUPFAM" id="SSF64263">
    <property type="entry name" value="Prokaryotic ribosomal protein L17"/>
    <property type="match status" value="1"/>
</dbReference>
<dbReference type="PROSITE" id="PS01167">
    <property type="entry name" value="RIBOSOMAL_L17"/>
    <property type="match status" value="1"/>
</dbReference>
<gene>
    <name evidence="1" type="primary">rplQ</name>
    <name type="ordered locus">CBU_0264</name>
</gene>
<feature type="chain" id="PRO_0000267861" description="Large ribosomal subunit protein bL17">
    <location>
        <begin position="1"/>
        <end position="126"/>
    </location>
</feature>